<comment type="function">
    <text evidence="1">Specifically methylates position 2 of adenine 2503 in 23S rRNA and position 2 of adenine 37 in tRNAs.</text>
</comment>
<comment type="catalytic activity">
    <reaction evidence="1">
        <text>adenosine(2503) in 23S rRNA + 2 reduced [2Fe-2S]-[ferredoxin] + 2 S-adenosyl-L-methionine = 2-methyladenosine(2503) in 23S rRNA + 5'-deoxyadenosine + L-methionine + 2 oxidized [2Fe-2S]-[ferredoxin] + S-adenosyl-L-homocysteine</text>
        <dbReference type="Rhea" id="RHEA:42916"/>
        <dbReference type="Rhea" id="RHEA-COMP:10000"/>
        <dbReference type="Rhea" id="RHEA-COMP:10001"/>
        <dbReference type="Rhea" id="RHEA-COMP:10152"/>
        <dbReference type="Rhea" id="RHEA-COMP:10282"/>
        <dbReference type="ChEBI" id="CHEBI:17319"/>
        <dbReference type="ChEBI" id="CHEBI:33737"/>
        <dbReference type="ChEBI" id="CHEBI:33738"/>
        <dbReference type="ChEBI" id="CHEBI:57844"/>
        <dbReference type="ChEBI" id="CHEBI:57856"/>
        <dbReference type="ChEBI" id="CHEBI:59789"/>
        <dbReference type="ChEBI" id="CHEBI:74411"/>
        <dbReference type="ChEBI" id="CHEBI:74497"/>
        <dbReference type="EC" id="2.1.1.192"/>
    </reaction>
</comment>
<comment type="catalytic activity">
    <reaction evidence="1">
        <text>adenosine(37) in tRNA + 2 reduced [2Fe-2S]-[ferredoxin] + 2 S-adenosyl-L-methionine = 2-methyladenosine(37) in tRNA + 5'-deoxyadenosine + L-methionine + 2 oxidized [2Fe-2S]-[ferredoxin] + S-adenosyl-L-homocysteine</text>
        <dbReference type="Rhea" id="RHEA:43332"/>
        <dbReference type="Rhea" id="RHEA-COMP:10000"/>
        <dbReference type="Rhea" id="RHEA-COMP:10001"/>
        <dbReference type="Rhea" id="RHEA-COMP:10162"/>
        <dbReference type="Rhea" id="RHEA-COMP:10485"/>
        <dbReference type="ChEBI" id="CHEBI:17319"/>
        <dbReference type="ChEBI" id="CHEBI:33737"/>
        <dbReference type="ChEBI" id="CHEBI:33738"/>
        <dbReference type="ChEBI" id="CHEBI:57844"/>
        <dbReference type="ChEBI" id="CHEBI:57856"/>
        <dbReference type="ChEBI" id="CHEBI:59789"/>
        <dbReference type="ChEBI" id="CHEBI:74411"/>
        <dbReference type="ChEBI" id="CHEBI:74497"/>
        <dbReference type="EC" id="2.1.1.192"/>
    </reaction>
</comment>
<comment type="cofactor">
    <cofactor evidence="1">
        <name>[4Fe-4S] cluster</name>
        <dbReference type="ChEBI" id="CHEBI:49883"/>
    </cofactor>
    <text evidence="1">Binds 1 [4Fe-4S] cluster. The cluster is coordinated with 3 cysteines and an exchangeable S-adenosyl-L-methionine.</text>
</comment>
<comment type="subcellular location">
    <subcellularLocation>
        <location evidence="1">Cytoplasm</location>
    </subcellularLocation>
</comment>
<comment type="miscellaneous">
    <text evidence="1">Reaction proceeds by a ping-pong mechanism involving intermediate methylation of a conserved cysteine residue.</text>
</comment>
<comment type="similarity">
    <text evidence="1">Belongs to the radical SAM superfamily. RlmN family.</text>
</comment>
<feature type="chain" id="PRO_1000188567" description="Probable dual-specificity RNA methyltransferase RlmN">
    <location>
        <begin position="1"/>
        <end position="348"/>
    </location>
</feature>
<feature type="domain" description="Radical SAM core" evidence="2">
    <location>
        <begin position="95"/>
        <end position="328"/>
    </location>
</feature>
<feature type="active site" description="Proton acceptor" evidence="1">
    <location>
        <position position="89"/>
    </location>
</feature>
<feature type="active site" description="S-methylcysteine intermediate" evidence="1">
    <location>
        <position position="333"/>
    </location>
</feature>
<feature type="binding site" evidence="1">
    <location>
        <position position="109"/>
    </location>
    <ligand>
        <name>[4Fe-4S] cluster</name>
        <dbReference type="ChEBI" id="CHEBI:49883"/>
        <note>4Fe-4S-S-AdoMet</note>
    </ligand>
</feature>
<feature type="binding site" evidence="1">
    <location>
        <position position="113"/>
    </location>
    <ligand>
        <name>[4Fe-4S] cluster</name>
        <dbReference type="ChEBI" id="CHEBI:49883"/>
        <note>4Fe-4S-S-AdoMet</note>
    </ligand>
</feature>
<feature type="binding site" evidence="1">
    <location>
        <position position="116"/>
    </location>
    <ligand>
        <name>[4Fe-4S] cluster</name>
        <dbReference type="ChEBI" id="CHEBI:49883"/>
        <note>4Fe-4S-S-AdoMet</note>
    </ligand>
</feature>
<feature type="binding site" evidence="1">
    <location>
        <begin position="159"/>
        <end position="160"/>
    </location>
    <ligand>
        <name>S-adenosyl-L-methionine</name>
        <dbReference type="ChEBI" id="CHEBI:59789"/>
    </ligand>
</feature>
<feature type="binding site" evidence="1">
    <location>
        <position position="191"/>
    </location>
    <ligand>
        <name>S-adenosyl-L-methionine</name>
        <dbReference type="ChEBI" id="CHEBI:59789"/>
    </ligand>
</feature>
<feature type="binding site" evidence="1">
    <location>
        <begin position="214"/>
        <end position="216"/>
    </location>
    <ligand>
        <name>S-adenosyl-L-methionine</name>
        <dbReference type="ChEBI" id="CHEBI:59789"/>
    </ligand>
</feature>
<feature type="binding site" evidence="1">
    <location>
        <position position="290"/>
    </location>
    <ligand>
        <name>S-adenosyl-L-methionine</name>
        <dbReference type="ChEBI" id="CHEBI:59789"/>
    </ligand>
</feature>
<feature type="disulfide bond" description="(transient)" evidence="1">
    <location>
        <begin position="102"/>
        <end position="333"/>
    </location>
</feature>
<proteinExistence type="inferred from homology"/>
<evidence type="ECO:0000255" key="1">
    <source>
        <dbReference type="HAMAP-Rule" id="MF_01849"/>
    </source>
</evidence>
<evidence type="ECO:0000255" key="2">
    <source>
        <dbReference type="PROSITE-ProRule" id="PRU01266"/>
    </source>
</evidence>
<accession>B8E0X3</accession>
<reference key="1">
    <citation type="journal article" date="2016" name="Front. Microbiol.">
        <title>The complete genome sequence of hyperthermophile Dictyoglomus turgidum DSM 6724 reveals a specialized carbohydrate fermentor.</title>
        <authorList>
            <person name="Brumm P.J."/>
            <person name="Gowda K."/>
            <person name="Robb F.T."/>
            <person name="Mead D.A."/>
        </authorList>
    </citation>
    <scope>NUCLEOTIDE SEQUENCE [LARGE SCALE GENOMIC DNA]</scope>
    <source>
        <strain>DSM 6724 / Z-1310</strain>
    </source>
</reference>
<organism>
    <name type="scientific">Dictyoglomus turgidum (strain DSM 6724 / Z-1310)</name>
    <dbReference type="NCBI Taxonomy" id="515635"/>
    <lineage>
        <taxon>Bacteria</taxon>
        <taxon>Pseudomonadati</taxon>
        <taxon>Dictyoglomota</taxon>
        <taxon>Dictyoglomia</taxon>
        <taxon>Dictyoglomales</taxon>
        <taxon>Dictyoglomaceae</taxon>
        <taxon>Dictyoglomus</taxon>
    </lineage>
</organism>
<gene>
    <name evidence="1" type="primary">rlmN</name>
    <name type="ordered locus">Dtur_1436</name>
</gene>
<name>RLMN_DICTD</name>
<sequence>MNNILSFEINEIRNILQGWGEPSYRADQIFDWIYKKLVLNPLDMTNLSKTLRQKLLEYFSFQIPKVVRITGDGNTKKYLLELEDGENIETVLISHKNRNTVCVSVQVGCPIGCKFCATGLIGLKRNLETHEIIGQLMVIQEDLEKKEEKISNVVYMGMGEPLANYDNVIKSIRIIKEEWGFNIGSKHITLSTIGIIPKIYQLAEENLKIRLAISLHASNNELRSKIIPINKEYPIEELLESAFYYAEKTGRRVTFEYVLIKNFNDRREDAKELVRLLKGKPAHVNLIPWNKVREYPWETSDLKDIFRFKEILANSGINVTLRISYGSKIKAGCGQLRALYLKNKGETI</sequence>
<keyword id="KW-0004">4Fe-4S</keyword>
<keyword id="KW-0963">Cytoplasm</keyword>
<keyword id="KW-1015">Disulfide bond</keyword>
<keyword id="KW-0408">Iron</keyword>
<keyword id="KW-0411">Iron-sulfur</keyword>
<keyword id="KW-0479">Metal-binding</keyword>
<keyword id="KW-0489">Methyltransferase</keyword>
<keyword id="KW-1185">Reference proteome</keyword>
<keyword id="KW-0698">rRNA processing</keyword>
<keyword id="KW-0949">S-adenosyl-L-methionine</keyword>
<keyword id="KW-0808">Transferase</keyword>
<keyword id="KW-0819">tRNA processing</keyword>
<protein>
    <recommendedName>
        <fullName evidence="1">Probable dual-specificity RNA methyltransferase RlmN</fullName>
        <ecNumber evidence="1">2.1.1.192</ecNumber>
    </recommendedName>
    <alternativeName>
        <fullName evidence="1">23S rRNA (adenine(2503)-C(2))-methyltransferase</fullName>
    </alternativeName>
    <alternativeName>
        <fullName evidence="1">23S rRNA m2A2503 methyltransferase</fullName>
    </alternativeName>
    <alternativeName>
        <fullName evidence="1">Ribosomal RNA large subunit methyltransferase N</fullName>
    </alternativeName>
    <alternativeName>
        <fullName evidence="1">tRNA (adenine(37)-C(2))-methyltransferase</fullName>
    </alternativeName>
    <alternativeName>
        <fullName evidence="1">tRNA m2A37 methyltransferase</fullName>
    </alternativeName>
</protein>
<dbReference type="EC" id="2.1.1.192" evidence="1"/>
<dbReference type="EMBL" id="CP001251">
    <property type="protein sequence ID" value="ACK42710.1"/>
    <property type="molecule type" value="Genomic_DNA"/>
</dbReference>
<dbReference type="RefSeq" id="WP_012583788.1">
    <property type="nucleotide sequence ID" value="NC_011661.1"/>
</dbReference>
<dbReference type="RefSeq" id="YP_002353324.1">
    <property type="nucleotide sequence ID" value="NC_011661.1"/>
</dbReference>
<dbReference type="SMR" id="B8E0X3"/>
<dbReference type="FunCoup" id="B8E0X3">
    <property type="interactions" value="409"/>
</dbReference>
<dbReference type="STRING" id="515635.Dtur_1436"/>
<dbReference type="EnsemblBacteria" id="ACK42710">
    <property type="protein sequence ID" value="ACK42710"/>
    <property type="gene ID" value="Dtur_1436"/>
</dbReference>
<dbReference type="KEGG" id="dtu:Dtur_1436"/>
<dbReference type="PATRIC" id="fig|515635.4.peg.1483"/>
<dbReference type="eggNOG" id="COG0820">
    <property type="taxonomic scope" value="Bacteria"/>
</dbReference>
<dbReference type="HOGENOM" id="CLU_029101_0_1_0"/>
<dbReference type="InParanoid" id="B8E0X3"/>
<dbReference type="OrthoDB" id="9793973at2"/>
<dbReference type="Proteomes" id="UP000007719">
    <property type="component" value="Chromosome"/>
</dbReference>
<dbReference type="GO" id="GO:0005737">
    <property type="term" value="C:cytoplasm"/>
    <property type="evidence" value="ECO:0007669"/>
    <property type="project" value="UniProtKB-SubCell"/>
</dbReference>
<dbReference type="GO" id="GO:0051539">
    <property type="term" value="F:4 iron, 4 sulfur cluster binding"/>
    <property type="evidence" value="ECO:0007669"/>
    <property type="project" value="UniProtKB-UniRule"/>
</dbReference>
<dbReference type="GO" id="GO:0046872">
    <property type="term" value="F:metal ion binding"/>
    <property type="evidence" value="ECO:0007669"/>
    <property type="project" value="UniProtKB-KW"/>
</dbReference>
<dbReference type="GO" id="GO:0070040">
    <property type="term" value="F:rRNA (adenine(2503)-C2-)-methyltransferase activity"/>
    <property type="evidence" value="ECO:0007669"/>
    <property type="project" value="UniProtKB-UniRule"/>
</dbReference>
<dbReference type="GO" id="GO:0019843">
    <property type="term" value="F:rRNA binding"/>
    <property type="evidence" value="ECO:0007669"/>
    <property type="project" value="UniProtKB-UniRule"/>
</dbReference>
<dbReference type="GO" id="GO:0002935">
    <property type="term" value="F:tRNA (adenine(37)-C2)-methyltransferase activity"/>
    <property type="evidence" value="ECO:0007669"/>
    <property type="project" value="UniProtKB-UniRule"/>
</dbReference>
<dbReference type="GO" id="GO:0000049">
    <property type="term" value="F:tRNA binding"/>
    <property type="evidence" value="ECO:0007669"/>
    <property type="project" value="UniProtKB-UniRule"/>
</dbReference>
<dbReference type="GO" id="GO:0070475">
    <property type="term" value="P:rRNA base methylation"/>
    <property type="evidence" value="ECO:0000318"/>
    <property type="project" value="GO_Central"/>
</dbReference>
<dbReference type="GO" id="GO:0030488">
    <property type="term" value="P:tRNA methylation"/>
    <property type="evidence" value="ECO:0000318"/>
    <property type="project" value="GO_Central"/>
</dbReference>
<dbReference type="CDD" id="cd01335">
    <property type="entry name" value="Radical_SAM"/>
    <property type="match status" value="1"/>
</dbReference>
<dbReference type="FunFam" id="3.20.20.70:FF:000014">
    <property type="entry name" value="Probable dual-specificity RNA methyltransferase RlmN"/>
    <property type="match status" value="1"/>
</dbReference>
<dbReference type="Gene3D" id="1.10.150.530">
    <property type="match status" value="1"/>
</dbReference>
<dbReference type="Gene3D" id="3.20.20.70">
    <property type="entry name" value="Aldolase class I"/>
    <property type="match status" value="1"/>
</dbReference>
<dbReference type="HAMAP" id="MF_01849">
    <property type="entry name" value="RNA_methyltr_RlmN"/>
    <property type="match status" value="1"/>
</dbReference>
<dbReference type="InterPro" id="IPR013785">
    <property type="entry name" value="Aldolase_TIM"/>
</dbReference>
<dbReference type="InterPro" id="IPR040072">
    <property type="entry name" value="Methyltransferase_A"/>
</dbReference>
<dbReference type="InterPro" id="IPR048641">
    <property type="entry name" value="RlmN_N"/>
</dbReference>
<dbReference type="InterPro" id="IPR027492">
    <property type="entry name" value="RNA_MTrfase_RlmN"/>
</dbReference>
<dbReference type="InterPro" id="IPR004383">
    <property type="entry name" value="rRNA_lsu_MTrfase_RlmN/Cfr"/>
</dbReference>
<dbReference type="InterPro" id="IPR007197">
    <property type="entry name" value="rSAM"/>
</dbReference>
<dbReference type="NCBIfam" id="TIGR00048">
    <property type="entry name" value="rRNA_mod_RlmN"/>
    <property type="match status" value="1"/>
</dbReference>
<dbReference type="PANTHER" id="PTHR30544">
    <property type="entry name" value="23S RRNA METHYLTRANSFERASE"/>
    <property type="match status" value="1"/>
</dbReference>
<dbReference type="PANTHER" id="PTHR30544:SF5">
    <property type="entry name" value="RADICAL SAM CORE DOMAIN-CONTAINING PROTEIN"/>
    <property type="match status" value="1"/>
</dbReference>
<dbReference type="Pfam" id="PF04055">
    <property type="entry name" value="Radical_SAM"/>
    <property type="match status" value="1"/>
</dbReference>
<dbReference type="Pfam" id="PF21016">
    <property type="entry name" value="RlmN_N"/>
    <property type="match status" value="1"/>
</dbReference>
<dbReference type="PIRSF" id="PIRSF006004">
    <property type="entry name" value="CHP00048"/>
    <property type="match status" value="1"/>
</dbReference>
<dbReference type="SFLD" id="SFLDF00275">
    <property type="entry name" value="adenosine_C2_methyltransferase"/>
    <property type="match status" value="1"/>
</dbReference>
<dbReference type="SFLD" id="SFLDS00029">
    <property type="entry name" value="Radical_SAM"/>
    <property type="match status" value="1"/>
</dbReference>
<dbReference type="SUPFAM" id="SSF102114">
    <property type="entry name" value="Radical SAM enzymes"/>
    <property type="match status" value="1"/>
</dbReference>
<dbReference type="PROSITE" id="PS51918">
    <property type="entry name" value="RADICAL_SAM"/>
    <property type="match status" value="1"/>
</dbReference>